<gene>
    <name evidence="1" type="primary">rplV</name>
    <name type="ordered locus">BDU_486</name>
</gene>
<organism>
    <name type="scientific">Borrelia duttonii (strain Ly)</name>
    <dbReference type="NCBI Taxonomy" id="412419"/>
    <lineage>
        <taxon>Bacteria</taxon>
        <taxon>Pseudomonadati</taxon>
        <taxon>Spirochaetota</taxon>
        <taxon>Spirochaetia</taxon>
        <taxon>Spirochaetales</taxon>
        <taxon>Borreliaceae</taxon>
        <taxon>Borrelia</taxon>
    </lineage>
</organism>
<sequence length="120" mass="13601">MFVNKKYTAKGKNLPSSPKKVRPIADNIRGKPYNEAVAILCSMPNKGAKLLGKVVKSAASNAMYHNRNLSEDMIFVKTVMVDDGRKRRSIWPRARGRADRLINRSCHIFVEVYEKMYGGE</sequence>
<dbReference type="EMBL" id="CP000976">
    <property type="protein sequence ID" value="ACH93427.1"/>
    <property type="molecule type" value="Genomic_DNA"/>
</dbReference>
<dbReference type="RefSeq" id="WP_012538237.1">
    <property type="nucleotide sequence ID" value="NC_011229.1"/>
</dbReference>
<dbReference type="SMR" id="B5RM41"/>
<dbReference type="STRING" id="412419.BDU_486"/>
<dbReference type="KEGG" id="bdu:BDU_486"/>
<dbReference type="eggNOG" id="COG0091">
    <property type="taxonomic scope" value="Bacteria"/>
</dbReference>
<dbReference type="HOGENOM" id="CLU_083987_3_1_12"/>
<dbReference type="OrthoDB" id="9805969at2"/>
<dbReference type="Proteomes" id="UP000000611">
    <property type="component" value="Chromosome"/>
</dbReference>
<dbReference type="GO" id="GO:0022625">
    <property type="term" value="C:cytosolic large ribosomal subunit"/>
    <property type="evidence" value="ECO:0007669"/>
    <property type="project" value="TreeGrafter"/>
</dbReference>
<dbReference type="GO" id="GO:0019843">
    <property type="term" value="F:rRNA binding"/>
    <property type="evidence" value="ECO:0007669"/>
    <property type="project" value="UniProtKB-UniRule"/>
</dbReference>
<dbReference type="GO" id="GO:0003735">
    <property type="term" value="F:structural constituent of ribosome"/>
    <property type="evidence" value="ECO:0007669"/>
    <property type="project" value="InterPro"/>
</dbReference>
<dbReference type="GO" id="GO:0006412">
    <property type="term" value="P:translation"/>
    <property type="evidence" value="ECO:0007669"/>
    <property type="project" value="UniProtKB-UniRule"/>
</dbReference>
<dbReference type="CDD" id="cd00336">
    <property type="entry name" value="Ribosomal_L22"/>
    <property type="match status" value="1"/>
</dbReference>
<dbReference type="Gene3D" id="3.90.470.10">
    <property type="entry name" value="Ribosomal protein L22/L17"/>
    <property type="match status" value="1"/>
</dbReference>
<dbReference type="HAMAP" id="MF_01331_B">
    <property type="entry name" value="Ribosomal_uL22_B"/>
    <property type="match status" value="1"/>
</dbReference>
<dbReference type="InterPro" id="IPR001063">
    <property type="entry name" value="Ribosomal_uL22"/>
</dbReference>
<dbReference type="InterPro" id="IPR005727">
    <property type="entry name" value="Ribosomal_uL22_bac/chlpt-type"/>
</dbReference>
<dbReference type="InterPro" id="IPR047867">
    <property type="entry name" value="Ribosomal_uL22_bac/org-type"/>
</dbReference>
<dbReference type="InterPro" id="IPR018260">
    <property type="entry name" value="Ribosomal_uL22_CS"/>
</dbReference>
<dbReference type="InterPro" id="IPR036394">
    <property type="entry name" value="Ribosomal_uL22_sf"/>
</dbReference>
<dbReference type="NCBIfam" id="TIGR01044">
    <property type="entry name" value="rplV_bact"/>
    <property type="match status" value="1"/>
</dbReference>
<dbReference type="PANTHER" id="PTHR13501">
    <property type="entry name" value="CHLOROPLAST 50S RIBOSOMAL PROTEIN L22-RELATED"/>
    <property type="match status" value="1"/>
</dbReference>
<dbReference type="PANTHER" id="PTHR13501:SF8">
    <property type="entry name" value="LARGE RIBOSOMAL SUBUNIT PROTEIN UL22M"/>
    <property type="match status" value="1"/>
</dbReference>
<dbReference type="Pfam" id="PF00237">
    <property type="entry name" value="Ribosomal_L22"/>
    <property type="match status" value="1"/>
</dbReference>
<dbReference type="SUPFAM" id="SSF54843">
    <property type="entry name" value="Ribosomal protein L22"/>
    <property type="match status" value="1"/>
</dbReference>
<dbReference type="PROSITE" id="PS00464">
    <property type="entry name" value="RIBOSOMAL_L22"/>
    <property type="match status" value="1"/>
</dbReference>
<comment type="function">
    <text evidence="1">This protein binds specifically to 23S rRNA; its binding is stimulated by other ribosomal proteins, e.g. L4, L17, and L20. It is important during the early stages of 50S assembly. It makes multiple contacts with different domains of the 23S rRNA in the assembled 50S subunit and ribosome (By similarity).</text>
</comment>
<comment type="function">
    <text evidence="1">The globular domain of the protein is located near the polypeptide exit tunnel on the outside of the subunit, while an extended beta-hairpin is found that lines the wall of the exit tunnel in the center of the 70S ribosome.</text>
</comment>
<comment type="subunit">
    <text evidence="1">Part of the 50S ribosomal subunit.</text>
</comment>
<comment type="similarity">
    <text evidence="1">Belongs to the universal ribosomal protein uL22 family.</text>
</comment>
<name>RL22_BORDL</name>
<keyword id="KW-0687">Ribonucleoprotein</keyword>
<keyword id="KW-0689">Ribosomal protein</keyword>
<keyword id="KW-0694">RNA-binding</keyword>
<keyword id="KW-0699">rRNA-binding</keyword>
<reference key="1">
    <citation type="journal article" date="2008" name="PLoS Genet.">
        <title>The genome of Borrelia recurrentis, the agent of deadly louse-borne relapsing fever, is a degraded subset of tick-borne Borrelia duttonii.</title>
        <authorList>
            <person name="Lescot M."/>
            <person name="Audic S."/>
            <person name="Robert C."/>
            <person name="Nguyen T.T."/>
            <person name="Blanc G."/>
            <person name="Cutler S.J."/>
            <person name="Wincker P."/>
            <person name="Couloux A."/>
            <person name="Claverie J.-M."/>
            <person name="Raoult D."/>
            <person name="Drancourt M."/>
        </authorList>
    </citation>
    <scope>NUCLEOTIDE SEQUENCE [LARGE SCALE GENOMIC DNA]</scope>
    <source>
        <strain>Ly</strain>
    </source>
</reference>
<protein>
    <recommendedName>
        <fullName evidence="1">Large ribosomal subunit protein uL22</fullName>
    </recommendedName>
    <alternativeName>
        <fullName evidence="3">50S ribosomal protein L22</fullName>
    </alternativeName>
</protein>
<evidence type="ECO:0000255" key="1">
    <source>
        <dbReference type="HAMAP-Rule" id="MF_01331"/>
    </source>
</evidence>
<evidence type="ECO:0000256" key="2">
    <source>
        <dbReference type="SAM" id="MobiDB-lite"/>
    </source>
</evidence>
<evidence type="ECO:0000305" key="3"/>
<proteinExistence type="inferred from homology"/>
<feature type="chain" id="PRO_1000142235" description="Large ribosomal subunit protein uL22">
    <location>
        <begin position="1"/>
        <end position="120"/>
    </location>
</feature>
<feature type="region of interest" description="Disordered" evidence="2">
    <location>
        <begin position="1"/>
        <end position="25"/>
    </location>
</feature>
<accession>B5RM41</accession>